<accession>B2HES1</accession>
<dbReference type="EC" id="2.5.1.19" evidence="1"/>
<dbReference type="EMBL" id="CP000854">
    <property type="protein sequence ID" value="ACC39778.1"/>
    <property type="molecule type" value="Genomic_DNA"/>
</dbReference>
<dbReference type="SMR" id="B2HES1"/>
<dbReference type="STRING" id="216594.MMAR_1320"/>
<dbReference type="KEGG" id="mmi:MMAR_1320"/>
<dbReference type="eggNOG" id="COG0128">
    <property type="taxonomic scope" value="Bacteria"/>
</dbReference>
<dbReference type="HOGENOM" id="CLU_024321_0_0_11"/>
<dbReference type="UniPathway" id="UPA00053">
    <property type="reaction ID" value="UER00089"/>
</dbReference>
<dbReference type="Proteomes" id="UP000001190">
    <property type="component" value="Chromosome"/>
</dbReference>
<dbReference type="GO" id="GO:0005737">
    <property type="term" value="C:cytoplasm"/>
    <property type="evidence" value="ECO:0007669"/>
    <property type="project" value="UniProtKB-SubCell"/>
</dbReference>
<dbReference type="GO" id="GO:0003866">
    <property type="term" value="F:3-phosphoshikimate 1-carboxyvinyltransferase activity"/>
    <property type="evidence" value="ECO:0007669"/>
    <property type="project" value="UniProtKB-UniRule"/>
</dbReference>
<dbReference type="GO" id="GO:0008652">
    <property type="term" value="P:amino acid biosynthetic process"/>
    <property type="evidence" value="ECO:0007669"/>
    <property type="project" value="UniProtKB-KW"/>
</dbReference>
<dbReference type="GO" id="GO:0009073">
    <property type="term" value="P:aromatic amino acid family biosynthetic process"/>
    <property type="evidence" value="ECO:0007669"/>
    <property type="project" value="UniProtKB-KW"/>
</dbReference>
<dbReference type="GO" id="GO:0009423">
    <property type="term" value="P:chorismate biosynthetic process"/>
    <property type="evidence" value="ECO:0007669"/>
    <property type="project" value="UniProtKB-UniRule"/>
</dbReference>
<dbReference type="CDD" id="cd01556">
    <property type="entry name" value="EPSP_synthase"/>
    <property type="match status" value="1"/>
</dbReference>
<dbReference type="FunFam" id="3.65.10.10:FF:000010">
    <property type="entry name" value="3-phosphoshikimate 1-carboxyvinyltransferase"/>
    <property type="match status" value="1"/>
</dbReference>
<dbReference type="FunFam" id="3.65.10.10:FF:000011">
    <property type="entry name" value="3-phosphoshikimate 1-carboxyvinyltransferase"/>
    <property type="match status" value="1"/>
</dbReference>
<dbReference type="Gene3D" id="3.65.10.10">
    <property type="entry name" value="Enolpyruvate transferase domain"/>
    <property type="match status" value="2"/>
</dbReference>
<dbReference type="HAMAP" id="MF_00210">
    <property type="entry name" value="EPSP_synth"/>
    <property type="match status" value="1"/>
</dbReference>
<dbReference type="InterPro" id="IPR001986">
    <property type="entry name" value="Enolpyruvate_Tfrase_dom"/>
</dbReference>
<dbReference type="InterPro" id="IPR036968">
    <property type="entry name" value="Enolpyruvate_Tfrase_sf"/>
</dbReference>
<dbReference type="InterPro" id="IPR006264">
    <property type="entry name" value="EPSP_synthase"/>
</dbReference>
<dbReference type="InterPro" id="IPR023193">
    <property type="entry name" value="EPSP_synthase_CS"/>
</dbReference>
<dbReference type="InterPro" id="IPR013792">
    <property type="entry name" value="RNA3'P_cycl/enolpyr_Trfase_a/b"/>
</dbReference>
<dbReference type="NCBIfam" id="TIGR01356">
    <property type="entry name" value="aroA"/>
    <property type="match status" value="1"/>
</dbReference>
<dbReference type="PANTHER" id="PTHR21090">
    <property type="entry name" value="AROM/DEHYDROQUINATE SYNTHASE"/>
    <property type="match status" value="1"/>
</dbReference>
<dbReference type="PANTHER" id="PTHR21090:SF5">
    <property type="entry name" value="PENTAFUNCTIONAL AROM POLYPEPTIDE"/>
    <property type="match status" value="1"/>
</dbReference>
<dbReference type="Pfam" id="PF00275">
    <property type="entry name" value="EPSP_synthase"/>
    <property type="match status" value="1"/>
</dbReference>
<dbReference type="PIRSF" id="PIRSF000505">
    <property type="entry name" value="EPSPS"/>
    <property type="match status" value="1"/>
</dbReference>
<dbReference type="SUPFAM" id="SSF55205">
    <property type="entry name" value="EPT/RTPC-like"/>
    <property type="match status" value="1"/>
</dbReference>
<dbReference type="PROSITE" id="PS00104">
    <property type="entry name" value="EPSP_SYNTHASE_1"/>
    <property type="match status" value="1"/>
</dbReference>
<dbReference type="PROSITE" id="PS00885">
    <property type="entry name" value="EPSP_SYNTHASE_2"/>
    <property type="match status" value="1"/>
</dbReference>
<comment type="function">
    <text evidence="1">Catalyzes the transfer of the enolpyruvyl moiety of phosphoenolpyruvate (PEP) to the 5-hydroxyl of shikimate-3-phosphate (S3P) to produce enolpyruvyl shikimate-3-phosphate and inorganic phosphate.</text>
</comment>
<comment type="catalytic activity">
    <reaction evidence="1">
        <text>3-phosphoshikimate + phosphoenolpyruvate = 5-O-(1-carboxyvinyl)-3-phosphoshikimate + phosphate</text>
        <dbReference type="Rhea" id="RHEA:21256"/>
        <dbReference type="ChEBI" id="CHEBI:43474"/>
        <dbReference type="ChEBI" id="CHEBI:57701"/>
        <dbReference type="ChEBI" id="CHEBI:58702"/>
        <dbReference type="ChEBI" id="CHEBI:145989"/>
        <dbReference type="EC" id="2.5.1.19"/>
    </reaction>
    <physiologicalReaction direction="left-to-right" evidence="1">
        <dbReference type="Rhea" id="RHEA:21257"/>
    </physiologicalReaction>
</comment>
<comment type="pathway">
    <text evidence="1">Metabolic intermediate biosynthesis; chorismate biosynthesis; chorismate from D-erythrose 4-phosphate and phosphoenolpyruvate: step 6/7.</text>
</comment>
<comment type="subunit">
    <text evidence="1">Monomer.</text>
</comment>
<comment type="subcellular location">
    <subcellularLocation>
        <location evidence="1">Cytoplasm</location>
    </subcellularLocation>
</comment>
<comment type="similarity">
    <text evidence="1">Belongs to the EPSP synthase family.</text>
</comment>
<reference key="1">
    <citation type="journal article" date="2008" name="Genome Res.">
        <title>Insights from the complete genome sequence of Mycobacterium marinum on the evolution of Mycobacterium tuberculosis.</title>
        <authorList>
            <person name="Stinear T.P."/>
            <person name="Seemann T."/>
            <person name="Harrison P.F."/>
            <person name="Jenkin G.A."/>
            <person name="Davies J.K."/>
            <person name="Johnson P.D."/>
            <person name="Abdellah Z."/>
            <person name="Arrowsmith C."/>
            <person name="Chillingworth T."/>
            <person name="Churcher C."/>
            <person name="Clarke K."/>
            <person name="Cronin A."/>
            <person name="Davis P."/>
            <person name="Goodhead I."/>
            <person name="Holroyd N."/>
            <person name="Jagels K."/>
            <person name="Lord A."/>
            <person name="Moule S."/>
            <person name="Mungall K."/>
            <person name="Norbertczak H."/>
            <person name="Quail M.A."/>
            <person name="Rabbinowitsch E."/>
            <person name="Walker D."/>
            <person name="White B."/>
            <person name="Whitehead S."/>
            <person name="Small P.L."/>
            <person name="Brosch R."/>
            <person name="Ramakrishnan L."/>
            <person name="Fischbach M.A."/>
            <person name="Parkhill J."/>
            <person name="Cole S.T."/>
        </authorList>
    </citation>
    <scope>NUCLEOTIDE SEQUENCE [LARGE SCALE GENOMIC DNA]</scope>
    <source>
        <strain>ATCC BAA-535 / M</strain>
    </source>
</reference>
<organism>
    <name type="scientific">Mycobacterium marinum (strain ATCC BAA-535 / M)</name>
    <dbReference type="NCBI Taxonomy" id="216594"/>
    <lineage>
        <taxon>Bacteria</taxon>
        <taxon>Bacillati</taxon>
        <taxon>Actinomycetota</taxon>
        <taxon>Actinomycetes</taxon>
        <taxon>Mycobacteriales</taxon>
        <taxon>Mycobacteriaceae</taxon>
        <taxon>Mycobacterium</taxon>
        <taxon>Mycobacterium ulcerans group</taxon>
    </lineage>
</organism>
<keyword id="KW-0028">Amino-acid biosynthesis</keyword>
<keyword id="KW-0057">Aromatic amino acid biosynthesis</keyword>
<keyword id="KW-0963">Cytoplasm</keyword>
<keyword id="KW-1185">Reference proteome</keyword>
<keyword id="KW-0808">Transferase</keyword>
<gene>
    <name evidence="1" type="primary">aroA</name>
    <name type="ordered locus">MMAR_1320</name>
</gene>
<evidence type="ECO:0000255" key="1">
    <source>
        <dbReference type="HAMAP-Rule" id="MF_00210"/>
    </source>
</evidence>
<sequence>MSSIEPWPAPFAPTPVHATVTVPGSKSQTNRTLVLAALAAAQGQGSSTITGALRSRDTDLMIEALQTLGLRVDGTGSELTVSGRIRPGPEARVDCGLAGTVLRFVPPLAALSAAPITFDGDEQARARPIAPLLDALRGLGVPVDGAGLPFRVQGTGSVAGGTVAIDASASSQFVSGLLLSGASFTDGLTVQHTGSELPSAPHIAMTVQMLRQAGVDVDDSIPNRWLVRPGALRPRHWDVEPDLTNAVAFLAAAVVTGGTVTITGWPADSVQPAKNILDILQTLNSTVRHIDSCLQVQGPQTYRGFDVDLRDVGELTPSVAALAALASPGSVSRLAGIAHLRGHETDRLAALSTEINRLGGNCEQTSDGLVITATPLRPGSWRAYADHRMAMAGAIVGLRVAGVEVDDIGATSKTLPEFPQLWTEMVEGSSG</sequence>
<proteinExistence type="inferred from homology"/>
<name>AROA_MYCMM</name>
<feature type="chain" id="PRO_1000099724" description="3-phosphoshikimate 1-carboxyvinyltransferase">
    <location>
        <begin position="1"/>
        <end position="431"/>
    </location>
</feature>
<feature type="active site" description="Proton acceptor" evidence="1">
    <location>
        <position position="314"/>
    </location>
</feature>
<feature type="binding site" evidence="1">
    <location>
        <position position="26"/>
    </location>
    <ligand>
        <name>3-phosphoshikimate</name>
        <dbReference type="ChEBI" id="CHEBI:145989"/>
    </ligand>
</feature>
<feature type="binding site" evidence="1">
    <location>
        <position position="26"/>
    </location>
    <ligand>
        <name>phosphoenolpyruvate</name>
        <dbReference type="ChEBI" id="CHEBI:58702"/>
    </ligand>
</feature>
<feature type="binding site" evidence="1">
    <location>
        <position position="27"/>
    </location>
    <ligand>
        <name>3-phosphoshikimate</name>
        <dbReference type="ChEBI" id="CHEBI:145989"/>
    </ligand>
</feature>
<feature type="binding site" evidence="1">
    <location>
        <position position="31"/>
    </location>
    <ligand>
        <name>3-phosphoshikimate</name>
        <dbReference type="ChEBI" id="CHEBI:145989"/>
    </ligand>
</feature>
<feature type="binding site" evidence="1">
    <location>
        <position position="99"/>
    </location>
    <ligand>
        <name>phosphoenolpyruvate</name>
        <dbReference type="ChEBI" id="CHEBI:58702"/>
    </ligand>
</feature>
<feature type="binding site" evidence="1">
    <location>
        <position position="127"/>
    </location>
    <ligand>
        <name>phosphoenolpyruvate</name>
        <dbReference type="ChEBI" id="CHEBI:58702"/>
    </ligand>
</feature>
<feature type="binding site" evidence="1">
    <location>
        <position position="170"/>
    </location>
    <ligand>
        <name>3-phosphoshikimate</name>
        <dbReference type="ChEBI" id="CHEBI:145989"/>
    </ligand>
</feature>
<feature type="binding site" evidence="1">
    <location>
        <position position="171"/>
    </location>
    <ligand>
        <name>3-phosphoshikimate</name>
        <dbReference type="ChEBI" id="CHEBI:145989"/>
    </ligand>
</feature>
<feature type="binding site" evidence="1">
    <location>
        <position position="172"/>
    </location>
    <ligand>
        <name>3-phosphoshikimate</name>
        <dbReference type="ChEBI" id="CHEBI:145989"/>
    </ligand>
</feature>
<feature type="binding site" evidence="1">
    <location>
        <position position="172"/>
    </location>
    <ligand>
        <name>phosphoenolpyruvate</name>
        <dbReference type="ChEBI" id="CHEBI:58702"/>
    </ligand>
</feature>
<feature type="binding site" evidence="1">
    <location>
        <position position="199"/>
    </location>
    <ligand>
        <name>3-phosphoshikimate</name>
        <dbReference type="ChEBI" id="CHEBI:145989"/>
    </ligand>
</feature>
<feature type="binding site" evidence="1">
    <location>
        <position position="314"/>
    </location>
    <ligand>
        <name>3-phosphoshikimate</name>
        <dbReference type="ChEBI" id="CHEBI:145989"/>
    </ligand>
</feature>
<feature type="binding site" evidence="1">
    <location>
        <position position="343"/>
    </location>
    <ligand>
        <name>3-phosphoshikimate</name>
        <dbReference type="ChEBI" id="CHEBI:145989"/>
    </ligand>
</feature>
<feature type="binding site" evidence="1">
    <location>
        <position position="347"/>
    </location>
    <ligand>
        <name>phosphoenolpyruvate</name>
        <dbReference type="ChEBI" id="CHEBI:58702"/>
    </ligand>
</feature>
<feature type="binding site" evidence="1">
    <location>
        <position position="388"/>
    </location>
    <ligand>
        <name>phosphoenolpyruvate</name>
        <dbReference type="ChEBI" id="CHEBI:58702"/>
    </ligand>
</feature>
<feature type="binding site" evidence="1">
    <location>
        <position position="413"/>
    </location>
    <ligand>
        <name>phosphoenolpyruvate</name>
        <dbReference type="ChEBI" id="CHEBI:58702"/>
    </ligand>
</feature>
<protein>
    <recommendedName>
        <fullName evidence="1">3-phosphoshikimate 1-carboxyvinyltransferase</fullName>
        <ecNumber evidence="1">2.5.1.19</ecNumber>
    </recommendedName>
    <alternativeName>
        <fullName evidence="1">5-enolpyruvylshikimate-3-phosphate synthase</fullName>
        <shortName evidence="1">EPSP synthase</shortName>
        <shortName evidence="1">EPSPS</shortName>
    </alternativeName>
</protein>